<feature type="chain" id="PRO_0000320377" description="Nucleolar protein 16">
    <location>
        <begin position="1"/>
        <end position="239"/>
    </location>
</feature>
<feature type="region of interest" description="Disordered" evidence="2">
    <location>
        <begin position="1"/>
        <end position="31"/>
    </location>
</feature>
<feature type="region of interest" description="Disordered" evidence="2">
    <location>
        <begin position="81"/>
        <end position="124"/>
    </location>
</feature>
<feature type="compositionally biased region" description="Basic residues" evidence="2">
    <location>
        <begin position="1"/>
        <end position="23"/>
    </location>
</feature>
<feature type="compositionally biased region" description="Acidic residues" evidence="2">
    <location>
        <begin position="85"/>
        <end position="115"/>
    </location>
</feature>
<name>NOP16_KLULA</name>
<dbReference type="EMBL" id="CR382124">
    <property type="protein sequence ID" value="CAH00772.1"/>
    <property type="molecule type" value="Genomic_DNA"/>
</dbReference>
<dbReference type="RefSeq" id="XP_453676.1">
    <property type="nucleotide sequence ID" value="XM_453676.1"/>
</dbReference>
<dbReference type="SMR" id="Q6CQW3"/>
<dbReference type="FunCoup" id="Q6CQW3">
    <property type="interactions" value="336"/>
</dbReference>
<dbReference type="STRING" id="284590.Q6CQW3"/>
<dbReference type="PaxDb" id="284590-Q6CQW3"/>
<dbReference type="KEGG" id="kla:KLLA0_D13750g"/>
<dbReference type="eggNOG" id="KOG4771">
    <property type="taxonomic scope" value="Eukaryota"/>
</dbReference>
<dbReference type="HOGENOM" id="CLU_078857_0_0_1"/>
<dbReference type="InParanoid" id="Q6CQW3"/>
<dbReference type="OMA" id="MQQTEAD"/>
<dbReference type="Proteomes" id="UP000000598">
    <property type="component" value="Chromosome D"/>
</dbReference>
<dbReference type="GO" id="GO:0005730">
    <property type="term" value="C:nucleolus"/>
    <property type="evidence" value="ECO:0007669"/>
    <property type="project" value="UniProtKB-SubCell"/>
</dbReference>
<dbReference type="GO" id="GO:1990904">
    <property type="term" value="C:ribonucleoprotein complex"/>
    <property type="evidence" value="ECO:0007669"/>
    <property type="project" value="UniProtKB-KW"/>
</dbReference>
<dbReference type="GO" id="GO:0042273">
    <property type="term" value="P:ribosomal large subunit biogenesis"/>
    <property type="evidence" value="ECO:0007669"/>
    <property type="project" value="TreeGrafter"/>
</dbReference>
<dbReference type="GO" id="GO:0006364">
    <property type="term" value="P:rRNA processing"/>
    <property type="evidence" value="ECO:0007669"/>
    <property type="project" value="UniProtKB-KW"/>
</dbReference>
<dbReference type="InterPro" id="IPR019002">
    <property type="entry name" value="Ribosome_biogenesis_Nop16"/>
</dbReference>
<dbReference type="PANTHER" id="PTHR13243">
    <property type="entry name" value="HSPC111 PROTEIN-RELATED"/>
    <property type="match status" value="1"/>
</dbReference>
<dbReference type="PANTHER" id="PTHR13243:SF1">
    <property type="entry name" value="NUCLEOLAR PROTEIN 16"/>
    <property type="match status" value="1"/>
</dbReference>
<dbReference type="Pfam" id="PF09420">
    <property type="entry name" value="Nop16"/>
    <property type="match status" value="1"/>
</dbReference>
<evidence type="ECO:0000250" key="1"/>
<evidence type="ECO:0000256" key="2">
    <source>
        <dbReference type="SAM" id="MobiDB-lite"/>
    </source>
</evidence>
<evidence type="ECO:0000305" key="3"/>
<keyword id="KW-0539">Nucleus</keyword>
<keyword id="KW-1185">Reference proteome</keyword>
<keyword id="KW-0687">Ribonucleoprotein</keyword>
<keyword id="KW-0690">Ribosome biogenesis</keyword>
<keyword id="KW-0698">rRNA processing</keyword>
<reference key="1">
    <citation type="journal article" date="2004" name="Nature">
        <title>Genome evolution in yeasts.</title>
        <authorList>
            <person name="Dujon B."/>
            <person name="Sherman D."/>
            <person name="Fischer G."/>
            <person name="Durrens P."/>
            <person name="Casaregola S."/>
            <person name="Lafontaine I."/>
            <person name="de Montigny J."/>
            <person name="Marck C."/>
            <person name="Neuveglise C."/>
            <person name="Talla E."/>
            <person name="Goffard N."/>
            <person name="Frangeul L."/>
            <person name="Aigle M."/>
            <person name="Anthouard V."/>
            <person name="Babour A."/>
            <person name="Barbe V."/>
            <person name="Barnay S."/>
            <person name="Blanchin S."/>
            <person name="Beckerich J.-M."/>
            <person name="Beyne E."/>
            <person name="Bleykasten C."/>
            <person name="Boisrame A."/>
            <person name="Boyer J."/>
            <person name="Cattolico L."/>
            <person name="Confanioleri F."/>
            <person name="de Daruvar A."/>
            <person name="Despons L."/>
            <person name="Fabre E."/>
            <person name="Fairhead C."/>
            <person name="Ferry-Dumazet H."/>
            <person name="Groppi A."/>
            <person name="Hantraye F."/>
            <person name="Hennequin C."/>
            <person name="Jauniaux N."/>
            <person name="Joyet P."/>
            <person name="Kachouri R."/>
            <person name="Kerrest A."/>
            <person name="Koszul R."/>
            <person name="Lemaire M."/>
            <person name="Lesur I."/>
            <person name="Ma L."/>
            <person name="Muller H."/>
            <person name="Nicaud J.-M."/>
            <person name="Nikolski M."/>
            <person name="Oztas S."/>
            <person name="Ozier-Kalogeropoulos O."/>
            <person name="Pellenz S."/>
            <person name="Potier S."/>
            <person name="Richard G.-F."/>
            <person name="Straub M.-L."/>
            <person name="Suleau A."/>
            <person name="Swennen D."/>
            <person name="Tekaia F."/>
            <person name="Wesolowski-Louvel M."/>
            <person name="Westhof E."/>
            <person name="Wirth B."/>
            <person name="Zeniou-Meyer M."/>
            <person name="Zivanovic Y."/>
            <person name="Bolotin-Fukuhara M."/>
            <person name="Thierry A."/>
            <person name="Bouchier C."/>
            <person name="Caudron B."/>
            <person name="Scarpelli C."/>
            <person name="Gaillardin C."/>
            <person name="Weissenbach J."/>
            <person name="Wincker P."/>
            <person name="Souciet J.-L."/>
        </authorList>
    </citation>
    <scope>NUCLEOTIDE SEQUENCE [LARGE SCALE GENOMIC DNA]</scope>
    <source>
        <strain>ATCC 8585 / CBS 2359 / DSM 70799 / NBRC 1267 / NRRL Y-1140 / WM37</strain>
    </source>
</reference>
<gene>
    <name type="primary">NOP16</name>
    <name type="ordered locus">KLLA0D13750g</name>
</gene>
<proteinExistence type="inferred from homology"/>
<comment type="function">
    <text evidence="1">Involved in the biogenesis of the 60S ribosomal subunit.</text>
</comment>
<comment type="subunit">
    <text evidence="1">Component of the pre-66S ribosomal particle.</text>
</comment>
<comment type="subcellular location">
    <subcellularLocation>
        <location evidence="1">Nucleus</location>
        <location evidence="1">Nucleolus</location>
    </subcellularLocation>
</comment>
<comment type="similarity">
    <text evidence="3">Belongs to the NOP16 family.</text>
</comment>
<sequence length="239" mass="28041">MASVRKRKMAKSSVKKVSRRNKDKQKQVNIKGNPIIAENWDYSLTLAQNYKKLGLKVKMGKFAGGEEADLSKVIKKDVYEHSAFSDDESEDEKDSQGEEDEDDVNLEELNSDGEYDESKIPEGEARIKRDDDGNIVKVYYGKRKAIDIDMDVEELRRENEKNEVKTEVVKKLEAYASRPVAKKERGLSQREDQWLEQLYKKHGDNYKKMFFDKKLNVYQQTENVLRRKILKWKELHNIE</sequence>
<organism>
    <name type="scientific">Kluyveromyces lactis (strain ATCC 8585 / CBS 2359 / DSM 70799 / NBRC 1267 / NRRL Y-1140 / WM37)</name>
    <name type="common">Yeast</name>
    <name type="synonym">Candida sphaerica</name>
    <dbReference type="NCBI Taxonomy" id="284590"/>
    <lineage>
        <taxon>Eukaryota</taxon>
        <taxon>Fungi</taxon>
        <taxon>Dikarya</taxon>
        <taxon>Ascomycota</taxon>
        <taxon>Saccharomycotina</taxon>
        <taxon>Saccharomycetes</taxon>
        <taxon>Saccharomycetales</taxon>
        <taxon>Saccharomycetaceae</taxon>
        <taxon>Kluyveromyces</taxon>
    </lineage>
</organism>
<accession>Q6CQW3</accession>
<protein>
    <recommendedName>
        <fullName>Nucleolar protein 16</fullName>
    </recommendedName>
</protein>